<reference key="1">
    <citation type="journal article" date="1997" name="Nature">
        <title>The nucleotide sequence of Saccharomyces cerevisiae chromosome XII.</title>
        <authorList>
            <person name="Johnston M."/>
            <person name="Hillier L.W."/>
            <person name="Riles L."/>
            <person name="Albermann K."/>
            <person name="Andre B."/>
            <person name="Ansorge W."/>
            <person name="Benes V."/>
            <person name="Brueckner M."/>
            <person name="Delius H."/>
            <person name="Dubois E."/>
            <person name="Duesterhoeft A."/>
            <person name="Entian K.-D."/>
            <person name="Floeth M."/>
            <person name="Goffeau A."/>
            <person name="Hebling U."/>
            <person name="Heumann K."/>
            <person name="Heuss-Neitzel D."/>
            <person name="Hilbert H."/>
            <person name="Hilger F."/>
            <person name="Kleine K."/>
            <person name="Koetter P."/>
            <person name="Louis E.J."/>
            <person name="Messenguy F."/>
            <person name="Mewes H.-W."/>
            <person name="Miosga T."/>
            <person name="Moestl D."/>
            <person name="Mueller-Auer S."/>
            <person name="Nentwich U."/>
            <person name="Obermaier B."/>
            <person name="Piravandi E."/>
            <person name="Pohl T.M."/>
            <person name="Portetelle D."/>
            <person name="Purnelle B."/>
            <person name="Rechmann S."/>
            <person name="Rieger M."/>
            <person name="Rinke M."/>
            <person name="Rose M."/>
            <person name="Scharfe M."/>
            <person name="Scherens B."/>
            <person name="Scholler P."/>
            <person name="Schwager C."/>
            <person name="Schwarz S."/>
            <person name="Underwood A.P."/>
            <person name="Urrestarazu L.A."/>
            <person name="Vandenbol M."/>
            <person name="Verhasselt P."/>
            <person name="Vierendeels F."/>
            <person name="Voet M."/>
            <person name="Volckaert G."/>
            <person name="Voss H."/>
            <person name="Wambutt R."/>
            <person name="Wedler E."/>
            <person name="Wedler H."/>
            <person name="Zimmermann F.K."/>
            <person name="Zollner A."/>
            <person name="Hani J."/>
            <person name="Hoheisel J.D."/>
        </authorList>
    </citation>
    <scope>NUCLEOTIDE SEQUENCE [LARGE SCALE GENOMIC DNA]</scope>
    <source>
        <strain>ATCC 204508 / S288c</strain>
    </source>
</reference>
<reference key="2">
    <citation type="journal article" date="2014" name="G3 (Bethesda)">
        <title>The reference genome sequence of Saccharomyces cerevisiae: Then and now.</title>
        <authorList>
            <person name="Engel S.R."/>
            <person name="Dietrich F.S."/>
            <person name="Fisk D.G."/>
            <person name="Binkley G."/>
            <person name="Balakrishnan R."/>
            <person name="Costanzo M.C."/>
            <person name="Dwight S.S."/>
            <person name="Hitz B.C."/>
            <person name="Karra K."/>
            <person name="Nash R.S."/>
            <person name="Weng S."/>
            <person name="Wong E.D."/>
            <person name="Lloyd P."/>
            <person name="Skrzypek M.S."/>
            <person name="Miyasato S.R."/>
            <person name="Simison M."/>
            <person name="Cherry J.M."/>
        </authorList>
    </citation>
    <scope>GENOME REANNOTATION</scope>
    <source>
        <strain>ATCC 204508 / S288c</strain>
    </source>
</reference>
<name>YL198_YEAST</name>
<accession>O13530</accession>
<feature type="chain" id="PRO_0000299621" description="Putative uncharacterized protein YLR198C">
    <location>
        <begin position="1"/>
        <end position="119"/>
    </location>
</feature>
<feature type="transmembrane region" description="Helical" evidence="1">
    <location>
        <begin position="19"/>
        <end position="39"/>
    </location>
</feature>
<feature type="transmembrane region" description="Helical" evidence="1">
    <location>
        <begin position="68"/>
        <end position="88"/>
    </location>
</feature>
<comment type="subcellular location">
    <subcellularLocation>
        <location evidence="2">Membrane</location>
        <topology evidence="2">Multi-pass membrane protein</topology>
    </subcellularLocation>
</comment>
<comment type="miscellaneous">
    <text evidence="2">Almost completely overlaps SIK1.</text>
</comment>
<comment type="caution">
    <text evidence="3">Product of a dubious gene prediction unlikely to encode a functional protein. Because of that it is not part of the S.cerevisiae S288c complete/reference proteome set.</text>
</comment>
<proteinExistence type="uncertain"/>
<dbReference type="EMBL" id="U14913">
    <property type="protein sequence ID" value="AAB67449.1"/>
    <property type="molecule type" value="Genomic_DNA"/>
</dbReference>
<dbReference type="PIR" id="S69293">
    <property type="entry name" value="S69293"/>
</dbReference>
<dbReference type="DIP" id="DIP-2112N"/>
<dbReference type="STRING" id="4932.YLR198C"/>
<dbReference type="PaxDb" id="4932-YLR198C"/>
<dbReference type="EnsemblFungi" id="YLR198C_mRNA">
    <property type="protein sequence ID" value="YLR198C"/>
    <property type="gene ID" value="YLR198C"/>
</dbReference>
<dbReference type="AGR" id="SGD:S000004188"/>
<dbReference type="SGD" id="S000004188">
    <property type="gene designation" value="YLR198C"/>
</dbReference>
<dbReference type="HOGENOM" id="CLU_2063328_0_0_1"/>
<dbReference type="GO" id="GO:0016020">
    <property type="term" value="C:membrane"/>
    <property type="evidence" value="ECO:0007669"/>
    <property type="project" value="UniProtKB-SubCell"/>
</dbReference>
<keyword id="KW-0472">Membrane</keyword>
<keyword id="KW-0812">Transmembrane</keyword>
<keyword id="KW-1133">Transmembrane helix</keyword>
<protein>
    <recommendedName>
        <fullName>Putative uncharacterized protein YLR198C</fullName>
    </recommendedName>
</protein>
<gene>
    <name type="ordered locus">YLR198C</name>
</gene>
<organism>
    <name type="scientific">Saccharomyces cerevisiae (strain ATCC 204508 / S288c)</name>
    <name type="common">Baker's yeast</name>
    <dbReference type="NCBI Taxonomy" id="559292"/>
    <lineage>
        <taxon>Eukaryota</taxon>
        <taxon>Fungi</taxon>
        <taxon>Dikarya</taxon>
        <taxon>Ascomycota</taxon>
        <taxon>Saccharomycotina</taxon>
        <taxon>Saccharomycetes</taxon>
        <taxon>Saccharomycetales</taxon>
        <taxon>Saccharomycetaceae</taxon>
        <taxon>Saccharomyces</taxon>
    </lineage>
</organism>
<sequence length="119" mass="14218">MGYTLFRFIVPFNPYFSSFYPSFPFYLSFPFCPSFPSFLSFPSSIFSLSFPSFLHHHLLIFSSLRIPFPWFLPLLQLVYLCYKVPWLLEWLIHSSKLAYQCCRILIFAQLVSLVRNQKH</sequence>
<evidence type="ECO:0000255" key="1"/>
<evidence type="ECO:0000305" key="2"/>
<evidence type="ECO:0000305" key="3">
    <source>
    </source>
</evidence>